<organism>
    <name type="scientific">Aspergillus oryzae (strain ATCC 42149 / RIB 40)</name>
    <name type="common">Yellow koji mold</name>
    <dbReference type="NCBI Taxonomy" id="510516"/>
    <lineage>
        <taxon>Eukaryota</taxon>
        <taxon>Fungi</taxon>
        <taxon>Dikarya</taxon>
        <taxon>Ascomycota</taxon>
        <taxon>Pezizomycotina</taxon>
        <taxon>Eurotiomycetes</taxon>
        <taxon>Eurotiomycetidae</taxon>
        <taxon>Eurotiales</taxon>
        <taxon>Aspergillaceae</taxon>
        <taxon>Aspergillus</taxon>
        <taxon>Aspergillus subgen. Circumdati</taxon>
    </lineage>
</organism>
<sequence>MSEGSNSTSAAASTQRQVRVQLTSKQEDIALPENTGPILVPTGLRRYALSTLVNNLLGNDKPIPFEFLINGSFLRTSIDEYLTANGISAETTLEIEYVRALIPPLHIASFEHDDWVSSVDVLSTTSPAASLASATIAAGQERILSGSYDGLLRVWNMSSQIVATSPSAADGGHTASIKAAKFISPNSIVSAGLDRTVRVWKYSEDGDGFSGKIAPQLELYGHKGPINSLSVHAPSNRILSASSDHSIGFWSTKKSDAPAAPEDLLPSAALRSSKRRKLNSSVTIPQRGPLALLSSHSAPVSAAIFDSNDSTVGYSASWDHSLRTWDLVTATLVDTRTTSHSLLSLEHLPEHHLLAAGTSARHITLIDPRVSATTIAAMTLRGHTNAVVSLARDPKSSYGLISGSHDGTCRIWDIRATKTDKDGVVGESVYSISRKSLEEQGKSEAKRIGGEGVKVFGVAWDGTVGIVSAGEDKRIQINRGEGVLSSA</sequence>
<accession>Q2UGK1</accession>
<dbReference type="EMBL" id="BA000051">
    <property type="protein sequence ID" value="BAE59314.1"/>
    <property type="molecule type" value="Genomic_DNA"/>
</dbReference>
<dbReference type="RefSeq" id="XP_001821316.1">
    <property type="nucleotide sequence ID" value="XM_001821264.2"/>
</dbReference>
<dbReference type="SMR" id="Q2UGK1"/>
<dbReference type="STRING" id="510516.Q2UGK1"/>
<dbReference type="EnsemblFungi" id="BAE59314">
    <property type="protein sequence ID" value="BAE59314"/>
    <property type="gene ID" value="AO090023000812"/>
</dbReference>
<dbReference type="GeneID" id="5993318"/>
<dbReference type="KEGG" id="aor:AO090023000812"/>
<dbReference type="VEuPathDB" id="FungiDB:AO090023000812"/>
<dbReference type="HOGENOM" id="CLU_000288_57_0_1"/>
<dbReference type="OMA" id="DHKYVEF"/>
<dbReference type="OrthoDB" id="109045at5052"/>
<dbReference type="Proteomes" id="UP000006564">
    <property type="component" value="Chromosome 3"/>
</dbReference>
<dbReference type="GO" id="GO:0005654">
    <property type="term" value="C:nucleoplasm"/>
    <property type="evidence" value="ECO:0007669"/>
    <property type="project" value="UniProtKB-SubCell"/>
</dbReference>
<dbReference type="GO" id="GO:0070545">
    <property type="term" value="C:PeBoW complex"/>
    <property type="evidence" value="ECO:0007669"/>
    <property type="project" value="EnsemblFungi"/>
</dbReference>
<dbReference type="GO" id="GO:0030687">
    <property type="term" value="C:preribosome, large subunit precursor"/>
    <property type="evidence" value="ECO:0007669"/>
    <property type="project" value="UniProtKB-UniRule"/>
</dbReference>
<dbReference type="GO" id="GO:0043021">
    <property type="term" value="F:ribonucleoprotein complex binding"/>
    <property type="evidence" value="ECO:0007669"/>
    <property type="project" value="UniProtKB-UniRule"/>
</dbReference>
<dbReference type="GO" id="GO:0051276">
    <property type="term" value="P:chromosome organization"/>
    <property type="evidence" value="ECO:0007669"/>
    <property type="project" value="EnsemblFungi"/>
</dbReference>
<dbReference type="GO" id="GO:0000466">
    <property type="term" value="P:maturation of 5.8S rRNA from tricistronic rRNA transcript (SSU-rRNA, 5.8S rRNA, LSU-rRNA)"/>
    <property type="evidence" value="ECO:0007669"/>
    <property type="project" value="UniProtKB-UniRule"/>
</dbReference>
<dbReference type="GO" id="GO:0000463">
    <property type="term" value="P:maturation of LSU-rRNA from tricistronic rRNA transcript (SSU-rRNA, 5.8S rRNA, LSU-rRNA)"/>
    <property type="evidence" value="ECO:0007669"/>
    <property type="project" value="UniProtKB-UniRule"/>
</dbReference>
<dbReference type="GO" id="GO:0110136">
    <property type="term" value="P:protein-RNA complex remodeling"/>
    <property type="evidence" value="ECO:0007669"/>
    <property type="project" value="EnsemblFungi"/>
</dbReference>
<dbReference type="CDD" id="cd00200">
    <property type="entry name" value="WD40"/>
    <property type="match status" value="1"/>
</dbReference>
<dbReference type="FunFam" id="2.130.10.10:FF:000593">
    <property type="entry name" value="Ribosome biogenesis protein ytm1"/>
    <property type="match status" value="1"/>
</dbReference>
<dbReference type="Gene3D" id="2.130.10.10">
    <property type="entry name" value="YVTN repeat-like/Quinoprotein amine dehydrogenase"/>
    <property type="match status" value="1"/>
</dbReference>
<dbReference type="HAMAP" id="MF_03029">
    <property type="entry name" value="WDR12"/>
    <property type="match status" value="1"/>
</dbReference>
<dbReference type="InterPro" id="IPR020472">
    <property type="entry name" value="G-protein_beta_WD-40_rep"/>
</dbReference>
<dbReference type="InterPro" id="IPR012972">
    <property type="entry name" value="NLE"/>
</dbReference>
<dbReference type="InterPro" id="IPR015943">
    <property type="entry name" value="WD40/YVTN_repeat-like_dom_sf"/>
</dbReference>
<dbReference type="InterPro" id="IPR019775">
    <property type="entry name" value="WD40_repeat_CS"/>
</dbReference>
<dbReference type="InterPro" id="IPR036322">
    <property type="entry name" value="WD40_repeat_dom_sf"/>
</dbReference>
<dbReference type="InterPro" id="IPR001680">
    <property type="entry name" value="WD40_rpt"/>
</dbReference>
<dbReference type="InterPro" id="IPR028599">
    <property type="entry name" value="WDR12/Ytm1"/>
</dbReference>
<dbReference type="PANTHER" id="PTHR19855:SF11">
    <property type="entry name" value="RIBOSOME BIOGENESIS PROTEIN WDR12"/>
    <property type="match status" value="1"/>
</dbReference>
<dbReference type="PANTHER" id="PTHR19855">
    <property type="entry name" value="WD40 REPEAT PROTEIN 12, 37"/>
    <property type="match status" value="1"/>
</dbReference>
<dbReference type="Pfam" id="PF08154">
    <property type="entry name" value="NLE"/>
    <property type="match status" value="1"/>
</dbReference>
<dbReference type="Pfam" id="PF00400">
    <property type="entry name" value="WD40"/>
    <property type="match status" value="5"/>
</dbReference>
<dbReference type="PRINTS" id="PR00320">
    <property type="entry name" value="GPROTEINBRPT"/>
</dbReference>
<dbReference type="SMART" id="SM00320">
    <property type="entry name" value="WD40"/>
    <property type="match status" value="7"/>
</dbReference>
<dbReference type="SUPFAM" id="SSF50978">
    <property type="entry name" value="WD40 repeat-like"/>
    <property type="match status" value="1"/>
</dbReference>
<dbReference type="PROSITE" id="PS00678">
    <property type="entry name" value="WD_REPEATS_1"/>
    <property type="match status" value="2"/>
</dbReference>
<dbReference type="PROSITE" id="PS50082">
    <property type="entry name" value="WD_REPEATS_2"/>
    <property type="match status" value="5"/>
</dbReference>
<dbReference type="PROSITE" id="PS50294">
    <property type="entry name" value="WD_REPEATS_REGION"/>
    <property type="match status" value="1"/>
</dbReference>
<evidence type="ECO:0000255" key="1">
    <source>
        <dbReference type="HAMAP-Rule" id="MF_03029"/>
    </source>
</evidence>
<reference key="1">
    <citation type="journal article" date="2005" name="Nature">
        <title>Genome sequencing and analysis of Aspergillus oryzae.</title>
        <authorList>
            <person name="Machida M."/>
            <person name="Asai K."/>
            <person name="Sano M."/>
            <person name="Tanaka T."/>
            <person name="Kumagai T."/>
            <person name="Terai G."/>
            <person name="Kusumoto K."/>
            <person name="Arima T."/>
            <person name="Akita O."/>
            <person name="Kashiwagi Y."/>
            <person name="Abe K."/>
            <person name="Gomi K."/>
            <person name="Horiuchi H."/>
            <person name="Kitamoto K."/>
            <person name="Kobayashi T."/>
            <person name="Takeuchi M."/>
            <person name="Denning D.W."/>
            <person name="Galagan J.E."/>
            <person name="Nierman W.C."/>
            <person name="Yu J."/>
            <person name="Archer D.B."/>
            <person name="Bennett J.W."/>
            <person name="Bhatnagar D."/>
            <person name="Cleveland T.E."/>
            <person name="Fedorova N.D."/>
            <person name="Gotoh O."/>
            <person name="Horikawa H."/>
            <person name="Hosoyama A."/>
            <person name="Ichinomiya M."/>
            <person name="Igarashi R."/>
            <person name="Iwashita K."/>
            <person name="Juvvadi P.R."/>
            <person name="Kato M."/>
            <person name="Kato Y."/>
            <person name="Kin T."/>
            <person name="Kokubun A."/>
            <person name="Maeda H."/>
            <person name="Maeyama N."/>
            <person name="Maruyama J."/>
            <person name="Nagasaki H."/>
            <person name="Nakajima T."/>
            <person name="Oda K."/>
            <person name="Okada K."/>
            <person name="Paulsen I."/>
            <person name="Sakamoto K."/>
            <person name="Sawano T."/>
            <person name="Takahashi M."/>
            <person name="Takase K."/>
            <person name="Terabayashi Y."/>
            <person name="Wortman J.R."/>
            <person name="Yamada O."/>
            <person name="Yamagata Y."/>
            <person name="Anazawa H."/>
            <person name="Hata Y."/>
            <person name="Koide Y."/>
            <person name="Komori T."/>
            <person name="Koyama Y."/>
            <person name="Minetoki T."/>
            <person name="Suharnan S."/>
            <person name="Tanaka A."/>
            <person name="Isono K."/>
            <person name="Kuhara S."/>
            <person name="Ogasawara N."/>
            <person name="Kikuchi H."/>
        </authorList>
    </citation>
    <scope>NUCLEOTIDE SEQUENCE [LARGE SCALE GENOMIC DNA]</scope>
    <source>
        <strain>ATCC 42149 / RIB 40</strain>
    </source>
</reference>
<gene>
    <name type="primary">ytm1</name>
    <name type="ORF">AO090023000812</name>
</gene>
<proteinExistence type="inferred from homology"/>
<comment type="function">
    <text evidence="1">Component of the NOP7 complex, which is required for maturation of the 25S and 5.8S ribosomal RNAs and formation of the 60S ribosome.</text>
</comment>
<comment type="subunit">
    <text evidence="1">Component of the NOP7 complex, composed of erb1, nop7 and ytm1. The complex is held together by erb1, which interacts with nop7 via its N-terminal domain and with ytm1 via a high-affinity interaction between the seven-bladed beta-propeller domains of the 2 proteins. The NOP7 complex associates with the 66S pre-ribosome. Interacts (via UBL domain) with mdn1 (via VWFA/MIDAS domain).</text>
</comment>
<comment type="subcellular location">
    <subcellularLocation>
        <location evidence="1">Nucleus</location>
        <location evidence="1">Nucleolus</location>
    </subcellularLocation>
    <subcellularLocation>
        <location evidence="1">Nucleus</location>
        <location evidence="1">Nucleoplasm</location>
    </subcellularLocation>
</comment>
<comment type="similarity">
    <text evidence="1">Belongs to the WD repeat WDR12/YTM1 family.</text>
</comment>
<name>YTM1_ASPOR</name>
<protein>
    <recommendedName>
        <fullName evidence="1">Ribosome biogenesis protein ytm1</fullName>
    </recommendedName>
</protein>
<keyword id="KW-0539">Nucleus</keyword>
<keyword id="KW-1185">Reference proteome</keyword>
<keyword id="KW-0677">Repeat</keyword>
<keyword id="KW-0690">Ribosome biogenesis</keyword>
<keyword id="KW-0698">rRNA processing</keyword>
<keyword id="KW-0853">WD repeat</keyword>
<feature type="chain" id="PRO_0000369578" description="Ribosome biogenesis protein ytm1">
    <location>
        <begin position="1"/>
        <end position="487"/>
    </location>
</feature>
<feature type="repeat" description="WD 1">
    <location>
        <begin position="126"/>
        <end position="165"/>
    </location>
</feature>
<feature type="repeat" description="WD 2">
    <location>
        <begin position="172"/>
        <end position="210"/>
    </location>
</feature>
<feature type="repeat" description="WD 3">
    <location>
        <begin position="221"/>
        <end position="260"/>
    </location>
</feature>
<feature type="repeat" description="WD 4">
    <location>
        <begin position="295"/>
        <end position="335"/>
    </location>
</feature>
<feature type="repeat" description="WD 5">
    <location>
        <begin position="337"/>
        <end position="376"/>
    </location>
</feature>
<feature type="repeat" description="WD 6">
    <location>
        <begin position="382"/>
        <end position="422"/>
    </location>
</feature>
<feature type="repeat" description="WD 7">
    <location>
        <begin position="450"/>
        <end position="487"/>
    </location>
</feature>
<feature type="region of interest" description="Ubiquitin-like (UBL) domain" evidence="1">
    <location>
        <begin position="18"/>
        <end position="99"/>
    </location>
</feature>